<feature type="signal peptide" evidence="2">
    <location>
        <begin position="1"/>
        <end position="25"/>
    </location>
</feature>
<feature type="chain" id="PRO_0000057956" description="Nitrate/nitrite binding protein NrtA">
    <location>
        <begin position="26"/>
        <end position="443"/>
    </location>
</feature>
<feature type="region of interest" description="Disordered" evidence="3">
    <location>
        <begin position="31"/>
        <end position="52"/>
    </location>
</feature>
<feature type="compositionally biased region" description="Low complexity" evidence="3">
    <location>
        <begin position="31"/>
        <end position="46"/>
    </location>
</feature>
<feature type="binding site" evidence="1">
    <location>
        <position position="96"/>
    </location>
    <ligand>
        <name>nitrate</name>
        <dbReference type="ChEBI" id="CHEBI:17632"/>
    </ligand>
</feature>
<feature type="binding site" evidence="1">
    <location>
        <position position="150"/>
    </location>
    <ligand>
        <name>nitrate</name>
        <dbReference type="ChEBI" id="CHEBI:17632"/>
    </ligand>
</feature>
<feature type="binding site" evidence="1">
    <location>
        <position position="195"/>
    </location>
    <ligand>
        <name>nitrate</name>
        <dbReference type="ChEBI" id="CHEBI:17632"/>
    </ligand>
</feature>
<feature type="binding site" evidence="1">
    <location>
        <position position="239"/>
    </location>
    <ligand>
        <name>nitrate</name>
        <dbReference type="ChEBI" id="CHEBI:17632"/>
    </ligand>
</feature>
<feature type="binding site" evidence="1">
    <location>
        <position position="268"/>
    </location>
    <ligand>
        <name>nitrate</name>
        <dbReference type="ChEBI" id="CHEBI:17632"/>
    </ligand>
</feature>
<feature type="lipid moiety-binding region" description="N-palmitoyl cysteine" evidence="11">
    <location>
        <position position="26"/>
    </location>
</feature>
<feature type="lipid moiety-binding region" description="S-diacylglycerol cysteine" evidence="11">
    <location>
        <position position="26"/>
    </location>
</feature>
<feature type="sequence conflict" description="In Ref. 4; AA sequence." evidence="11" ref="4">
    <original>E</original>
    <variation>G</variation>
    <location>
        <position position="260"/>
    </location>
</feature>
<keyword id="KW-0997">Cell inner membrane</keyword>
<keyword id="KW-1003">Cell membrane</keyword>
<keyword id="KW-0903">Direct protein sequencing</keyword>
<keyword id="KW-0406">Ion transport</keyword>
<keyword id="KW-0449">Lipoprotein</keyword>
<keyword id="KW-0472">Membrane</keyword>
<keyword id="KW-0534">Nitrate assimilation</keyword>
<keyword id="KW-0564">Palmitate</keyword>
<keyword id="KW-1185">Reference proteome</keyword>
<keyword id="KW-0732">Signal</keyword>
<keyword id="KW-0813">Transport</keyword>
<name>NRTA_SYNE7</name>
<reference key="1">
    <citation type="journal article" date="1991" name="Plant Cell Physiol.">
        <title>Cloning and characterization of the nrtA gene that encodes a 45-kDa protein involved in nitrate transport in the cyanobacterium Synechococcus PCC 7942.</title>
        <authorList>
            <person name="Omata T."/>
        </authorList>
    </citation>
    <scope>NUCLEOTIDE SEQUENCE [GENOMIC DNA]</scope>
    <source>
        <strain>ATCC 33912 / PCC 7942 / FACHB-805</strain>
    </source>
</reference>
<reference key="2">
    <citation type="submission" date="2005-08" db="EMBL/GenBank/DDBJ databases">
        <title>Complete sequence of chromosome 1 of Synechococcus elongatus PCC 7942.</title>
        <authorList>
            <consortium name="US DOE Joint Genome Institute"/>
            <person name="Copeland A."/>
            <person name="Lucas S."/>
            <person name="Lapidus A."/>
            <person name="Barry K."/>
            <person name="Detter J.C."/>
            <person name="Glavina T."/>
            <person name="Hammon N."/>
            <person name="Israni S."/>
            <person name="Pitluck S."/>
            <person name="Schmutz J."/>
            <person name="Larimer F."/>
            <person name="Land M."/>
            <person name="Kyrpides N."/>
            <person name="Lykidis A."/>
            <person name="Golden S."/>
            <person name="Richardson P."/>
        </authorList>
    </citation>
    <scope>NUCLEOTIDE SEQUENCE [LARGE SCALE GENOMIC DNA]</scope>
    <source>
        <strain>ATCC 33912 / PCC 7942 / FACHB-805</strain>
    </source>
</reference>
<reference key="3">
    <citation type="journal article" date="1993" name="Mol. Gen. Genet.">
        <title>Identification and characterization of a gene cluster involved in nitrate transport in the cyanobacterium Synechococcus sp. PCC7942.</title>
        <authorList>
            <person name="Omata T."/>
            <person name="Andriesse X."/>
            <person name="Hirano A."/>
        </authorList>
    </citation>
    <scope>NUCLEOTIDE SEQUENCE [GENOMIC DNA] OF 419-443</scope>
    <scope>FUNCTION</scope>
</reference>
<reference key="4">
    <citation type="journal article" date="2000" name="IUBMB Life">
        <title>The nitrogen source-dependent 126-kDa protein from Synechococcus PCC 7942 plasmalemma: a trimer of the NrtA nitrate-binding protein.</title>
        <authorList>
            <person name="Fresneau C."/>
            <person name="Zinovieva M."/>
            <person name="Blanot D."/>
            <person name="Batelier G."/>
            <person name="Arrio B."/>
        </authorList>
    </citation>
    <scope>PROTEIN SEQUENCE OF 251-263 AND 400-405</scope>
    <scope>SUBUNIT</scope>
    <source>
        <strain>ATCC 33912 / PCC 7942 / FACHB-805</strain>
    </source>
</reference>
<reference key="5">
    <citation type="journal article" date="1989" name="Proc. Natl. Acad. Sci. U.S.A.">
        <title>Genetically engineered mutant of the cyanobacterium Synechococcus PCC 7942 defective in nitrate transport.</title>
        <authorList>
            <person name="Omata T."/>
            <person name="Ohmori M."/>
            <person name="Arai N."/>
            <person name="Ogawa T."/>
        </authorList>
    </citation>
    <scope>FUNCTION IN NITRATE TRANSPORT</scope>
    <scope>SUBCELLULAR LOCATION</scope>
    <scope>INDUCTION</scope>
    <scope>DISRUPTION PHENOTYPE</scope>
</reference>
<reference key="6">
    <citation type="journal article" date="1995" name="Plant Cell Physiol.">
        <title>Structure, function and regulation of the nitrate transport system of the cyanobacterium Synechococcus sp. PCC7942.</title>
        <authorList>
            <person name="Omata T."/>
        </authorList>
    </citation>
    <scope>FUNCTION</scope>
    <scope>SUBUNIT</scope>
    <scope>SUBCELLULAR LOCATION</scope>
    <source>
        <strain>ATCC 33912 / PCC 7942 / FACHB-805</strain>
    </source>
</reference>
<reference key="7">
    <citation type="journal article" date="1997" name="J. Biol. Chem.">
        <title>Substrate-binding lipoprotein of the cyanobacterium Synechococcus sp. strain PCC 7942 involved in the transport of nitrate and nitrite.</title>
        <authorList>
            <person name="Maeda S."/>
            <person name="Omata T."/>
        </authorList>
    </citation>
    <scope>FUNCTION</scope>
    <scope>SUBCELLULAR LOCATION</scope>
    <scope>DISRUPTION PHENOTYPE</scope>
    <source>
        <strain>ATCC 33912 / PCC 7942 / FACHB-805</strain>
    </source>
</reference>
<comment type="function">
    <text evidence="5 6 7 8">Part of the ABC transporter complex NrtABCD involved in nitrate uptake (PubMed:16594065, PubMed:7767600, PubMed:8437564). The complex is probably also involved in nitrite transport (PubMed:7767600). NrtA is the substrate-binding protein (PubMed:7767600, PubMed:8437564, PubMed:9006953). Binds both nitrate and nitrite with high affinity (PubMed:9006953).</text>
</comment>
<comment type="subunit">
    <text evidence="4 12">The complex is composed of two ATP-binding proteins (NrtC and NrtD), two transmembrane proteins (NrtB) and a solute-binding protein (NrtA) (PubMed:7767600). NrtA can form homotrimers (PubMed:11032247).</text>
</comment>
<comment type="subcellular location">
    <subcellularLocation>
        <location evidence="5 12">Cell inner membrane</location>
        <topology evidence="8 12">Lipid-anchor</topology>
        <orientation evidence="12">Periplasmic side</orientation>
    </subcellularLocation>
</comment>
<comment type="induction">
    <text evidence="5">By nitrate, when present in the medium as source of nitrogen. Expression is suppressed by ammonium.</text>
</comment>
<comment type="PTM">
    <text evidence="9">The N-terminus is blocked.</text>
</comment>
<comment type="disruption phenotype">
    <text evidence="5 8">Mutant does not grow under low concentrations of nitrate (PubMed:16594065). Mutant is totally defective in nitrate uptake but shows significant nitrite uptake (PubMed:9006953).</text>
</comment>
<comment type="similarity">
    <text evidence="11">Belongs to the CmpA/NrtA family.</text>
</comment>
<protein>
    <recommendedName>
        <fullName evidence="11">Nitrate/nitrite binding protein NrtA</fullName>
    </recommendedName>
</protein>
<accession>P38043</accession>
<accession>Q31NV0</accession>
<sequence length="443" mass="48425">MSQFSRRKFLLTAGGTAAAALWLNACGSNNSSTDTTGSTSTPAPSGTSGGDAPEVKGVTLGFIALTDAAPVIIALEKGLFAKYGLPDTKVVKQTSWAVTRDNLELGSDRGGIDGAHILSPMPYLLTAGTITKSQKPLPMYILARLNTQGQGISLSNEFLAEKVQIKDPKLKAIADQKKASGKLLKAAVTFPGGTHDLWMRYWLAANGIDPNNDADLVVIPPPQMVANMQTGTMDTFCVGEPWNARLVNKKLGYTAAVTGELWKFHPEKALTIRADWADKNPKATMALLKAVQEAQIWCEDPANLDELCQITAQDKYFKTSVEDIKPRLQGDIDYGDGRSVKNSDLRMRFWSENASFPYKSHDLWFLTEDIRWGYLPASTDTKALIEKVNRSDLWREAAKAIGREQDIPASDSRGVETFFDGVTFDPENPQAYLDGLKFKAIKA</sequence>
<proteinExistence type="evidence at protein level"/>
<evidence type="ECO:0000250" key="1">
    <source>
        <dbReference type="UniProtKB" id="P73452"/>
    </source>
</evidence>
<evidence type="ECO:0000255" key="2"/>
<evidence type="ECO:0000256" key="3">
    <source>
        <dbReference type="SAM" id="MobiDB-lite"/>
    </source>
</evidence>
<evidence type="ECO:0000269" key="4">
    <source>
    </source>
</evidence>
<evidence type="ECO:0000269" key="5">
    <source>
    </source>
</evidence>
<evidence type="ECO:0000269" key="6">
    <source>
    </source>
</evidence>
<evidence type="ECO:0000269" key="7">
    <source>
    </source>
</evidence>
<evidence type="ECO:0000269" key="8">
    <source>
    </source>
</evidence>
<evidence type="ECO:0000269" key="9">
    <source ref="1"/>
</evidence>
<evidence type="ECO:0000303" key="10">
    <source ref="1"/>
</evidence>
<evidence type="ECO:0000305" key="11"/>
<evidence type="ECO:0000305" key="12">
    <source>
    </source>
</evidence>
<gene>
    <name evidence="10" type="primary">nrtA</name>
    <name type="ordered locus">Synpcc7942_1239</name>
</gene>
<organism>
    <name type="scientific">Synechococcus elongatus (strain ATCC 33912 / PCC 7942 / FACHB-805)</name>
    <name type="common">Anacystis nidulans R2</name>
    <dbReference type="NCBI Taxonomy" id="1140"/>
    <lineage>
        <taxon>Bacteria</taxon>
        <taxon>Bacillati</taxon>
        <taxon>Cyanobacteriota</taxon>
        <taxon>Cyanophyceae</taxon>
        <taxon>Synechococcales</taxon>
        <taxon>Synechococcaceae</taxon>
        <taxon>Synechococcus</taxon>
    </lineage>
</organism>
<dbReference type="EMBL" id="D12723">
    <property type="protein sequence ID" value="BAA02218.1"/>
    <property type="molecule type" value="Genomic_DNA"/>
</dbReference>
<dbReference type="EMBL" id="CP000100">
    <property type="protein sequence ID" value="ABB57269.1"/>
    <property type="molecule type" value="Genomic_DNA"/>
</dbReference>
<dbReference type="EMBL" id="X61625">
    <property type="protein sequence ID" value="CAA43809.1"/>
    <property type="molecule type" value="Genomic_DNA"/>
</dbReference>
<dbReference type="RefSeq" id="WP_011242625.1">
    <property type="nucleotide sequence ID" value="NZ_JACJTX010000003.1"/>
</dbReference>
<dbReference type="SMR" id="P38043"/>
<dbReference type="STRING" id="1140.Synpcc7942_1239"/>
<dbReference type="TCDB" id="3.A.1.16.1">
    <property type="family name" value="the atp-binding cassette (abc) superfamily"/>
</dbReference>
<dbReference type="PaxDb" id="1140-Synpcc7942_1239"/>
<dbReference type="KEGG" id="syf:Synpcc7942_1239"/>
<dbReference type="eggNOG" id="COG0715">
    <property type="taxonomic scope" value="Bacteria"/>
</dbReference>
<dbReference type="HOGENOM" id="CLU_037398_3_0_3"/>
<dbReference type="OrthoDB" id="568193at2"/>
<dbReference type="BioCyc" id="SYNEL:SYNPCC7942_1239-MONOMER"/>
<dbReference type="Proteomes" id="UP000889800">
    <property type="component" value="Chromosome"/>
</dbReference>
<dbReference type="GO" id="GO:0005886">
    <property type="term" value="C:plasma membrane"/>
    <property type="evidence" value="ECO:0007669"/>
    <property type="project" value="UniProtKB-SubCell"/>
</dbReference>
<dbReference type="GO" id="GO:0006811">
    <property type="term" value="P:monoatomic ion transport"/>
    <property type="evidence" value="ECO:0007669"/>
    <property type="project" value="UniProtKB-KW"/>
</dbReference>
<dbReference type="GO" id="GO:0042128">
    <property type="term" value="P:nitrate assimilation"/>
    <property type="evidence" value="ECO:0007669"/>
    <property type="project" value="UniProtKB-KW"/>
</dbReference>
<dbReference type="CDD" id="cd13553">
    <property type="entry name" value="PBP2_NrtA_CpmA_like"/>
    <property type="match status" value="1"/>
</dbReference>
<dbReference type="Gene3D" id="3.40.190.10">
    <property type="entry name" value="Periplasmic binding protein-like II"/>
    <property type="match status" value="2"/>
</dbReference>
<dbReference type="InterPro" id="IPR044527">
    <property type="entry name" value="NrtA/CpmA_ABC-bd_dom"/>
</dbReference>
<dbReference type="InterPro" id="IPR006311">
    <property type="entry name" value="TAT_signal"/>
</dbReference>
<dbReference type="PANTHER" id="PTHR30024">
    <property type="entry name" value="ALIPHATIC SULFONATES-BINDING PROTEIN-RELATED"/>
    <property type="match status" value="1"/>
</dbReference>
<dbReference type="PANTHER" id="PTHR30024:SF7">
    <property type="entry name" value="NITRATE_NITRITE BINDING PROTEIN NRTA"/>
    <property type="match status" value="1"/>
</dbReference>
<dbReference type="Pfam" id="PF13379">
    <property type="entry name" value="NMT1_2"/>
    <property type="match status" value="1"/>
</dbReference>
<dbReference type="SUPFAM" id="SSF53850">
    <property type="entry name" value="Periplasmic binding protein-like II"/>
    <property type="match status" value="1"/>
</dbReference>